<keyword id="KW-0067">ATP-binding</keyword>
<keyword id="KW-0963">Cytoplasm</keyword>
<keyword id="KW-1015">Disulfide bond</keyword>
<keyword id="KW-0547">Nucleotide-binding</keyword>
<keyword id="KW-0694">RNA-binding</keyword>
<keyword id="KW-0808">Transferase</keyword>
<keyword id="KW-0819">tRNA processing</keyword>
<keyword id="KW-0820">tRNA-binding</keyword>
<organism>
    <name type="scientific">Cutibacterium acnes (strain DSM 16379 / KPA171202)</name>
    <name type="common">Propionibacterium acnes</name>
    <dbReference type="NCBI Taxonomy" id="267747"/>
    <lineage>
        <taxon>Bacteria</taxon>
        <taxon>Bacillati</taxon>
        <taxon>Actinomycetota</taxon>
        <taxon>Actinomycetes</taxon>
        <taxon>Propionibacteriales</taxon>
        <taxon>Propionibacteriaceae</taxon>
        <taxon>Cutibacterium</taxon>
    </lineage>
</organism>
<comment type="function">
    <text evidence="1">Catalyzes the 2-thiolation of uridine at the wobble position (U34) of tRNA, leading to the formation of s(2)U34.</text>
</comment>
<comment type="catalytic activity">
    <reaction evidence="1">
        <text>S-sulfanyl-L-cysteinyl-[protein] + uridine(34) in tRNA + AH2 + ATP = 2-thiouridine(34) in tRNA + L-cysteinyl-[protein] + A + AMP + diphosphate + H(+)</text>
        <dbReference type="Rhea" id="RHEA:47032"/>
        <dbReference type="Rhea" id="RHEA-COMP:10131"/>
        <dbReference type="Rhea" id="RHEA-COMP:11726"/>
        <dbReference type="Rhea" id="RHEA-COMP:11727"/>
        <dbReference type="Rhea" id="RHEA-COMP:11728"/>
        <dbReference type="ChEBI" id="CHEBI:13193"/>
        <dbReference type="ChEBI" id="CHEBI:15378"/>
        <dbReference type="ChEBI" id="CHEBI:17499"/>
        <dbReference type="ChEBI" id="CHEBI:29950"/>
        <dbReference type="ChEBI" id="CHEBI:30616"/>
        <dbReference type="ChEBI" id="CHEBI:33019"/>
        <dbReference type="ChEBI" id="CHEBI:61963"/>
        <dbReference type="ChEBI" id="CHEBI:65315"/>
        <dbReference type="ChEBI" id="CHEBI:87170"/>
        <dbReference type="ChEBI" id="CHEBI:456215"/>
        <dbReference type="EC" id="2.8.1.13"/>
    </reaction>
</comment>
<comment type="subcellular location">
    <subcellularLocation>
        <location evidence="1">Cytoplasm</location>
    </subcellularLocation>
</comment>
<comment type="similarity">
    <text evidence="1">Belongs to the MnmA/TRMU family.</text>
</comment>
<proteinExistence type="inferred from homology"/>
<gene>
    <name evidence="1" type="primary">mnmA</name>
    <name type="synonym">trmU</name>
    <name type="ordered locus">PPA1117</name>
</gene>
<evidence type="ECO:0000255" key="1">
    <source>
        <dbReference type="HAMAP-Rule" id="MF_00144"/>
    </source>
</evidence>
<dbReference type="EC" id="2.8.1.13" evidence="1"/>
<dbReference type="EMBL" id="AE017283">
    <property type="protein sequence ID" value="AAT82865.1"/>
    <property type="molecule type" value="Genomic_DNA"/>
</dbReference>
<dbReference type="SMR" id="Q6A8Q1"/>
<dbReference type="EnsemblBacteria" id="AAT82865">
    <property type="protein sequence ID" value="AAT82865"/>
    <property type="gene ID" value="PPA1117"/>
</dbReference>
<dbReference type="KEGG" id="pac:PPA1117"/>
<dbReference type="eggNOG" id="COG0482">
    <property type="taxonomic scope" value="Bacteria"/>
</dbReference>
<dbReference type="HOGENOM" id="CLU_035188_0_2_11"/>
<dbReference type="Proteomes" id="UP000000603">
    <property type="component" value="Chromosome"/>
</dbReference>
<dbReference type="GO" id="GO:0005737">
    <property type="term" value="C:cytoplasm"/>
    <property type="evidence" value="ECO:0007669"/>
    <property type="project" value="UniProtKB-SubCell"/>
</dbReference>
<dbReference type="GO" id="GO:0005524">
    <property type="term" value="F:ATP binding"/>
    <property type="evidence" value="ECO:0007669"/>
    <property type="project" value="UniProtKB-KW"/>
</dbReference>
<dbReference type="GO" id="GO:0000049">
    <property type="term" value="F:tRNA binding"/>
    <property type="evidence" value="ECO:0007669"/>
    <property type="project" value="UniProtKB-KW"/>
</dbReference>
<dbReference type="GO" id="GO:0103016">
    <property type="term" value="F:tRNA-uridine 2-sulfurtransferase activity"/>
    <property type="evidence" value="ECO:0007669"/>
    <property type="project" value="UniProtKB-EC"/>
</dbReference>
<dbReference type="GO" id="GO:0002143">
    <property type="term" value="P:tRNA wobble position uridine thiolation"/>
    <property type="evidence" value="ECO:0007669"/>
    <property type="project" value="TreeGrafter"/>
</dbReference>
<dbReference type="CDD" id="cd01998">
    <property type="entry name" value="MnmA_TRMU-like"/>
    <property type="match status" value="1"/>
</dbReference>
<dbReference type="FunFam" id="3.40.50.620:FF:000057">
    <property type="entry name" value="tRNA-specific 2-thiouridylase MnmA"/>
    <property type="match status" value="1"/>
</dbReference>
<dbReference type="Gene3D" id="2.30.30.280">
    <property type="entry name" value="Adenine nucleotide alpha hydrolases-like domains"/>
    <property type="match status" value="1"/>
</dbReference>
<dbReference type="Gene3D" id="3.40.50.620">
    <property type="entry name" value="HUPs"/>
    <property type="match status" value="1"/>
</dbReference>
<dbReference type="Gene3D" id="2.40.30.10">
    <property type="entry name" value="Translation factors"/>
    <property type="match status" value="1"/>
</dbReference>
<dbReference type="HAMAP" id="MF_00144">
    <property type="entry name" value="tRNA_thiouridyl_MnmA"/>
    <property type="match status" value="1"/>
</dbReference>
<dbReference type="InterPro" id="IPR004506">
    <property type="entry name" value="MnmA-like"/>
</dbReference>
<dbReference type="InterPro" id="IPR046885">
    <property type="entry name" value="MnmA-like_C"/>
</dbReference>
<dbReference type="InterPro" id="IPR046884">
    <property type="entry name" value="MnmA-like_central"/>
</dbReference>
<dbReference type="InterPro" id="IPR023382">
    <property type="entry name" value="MnmA-like_central_sf"/>
</dbReference>
<dbReference type="InterPro" id="IPR014729">
    <property type="entry name" value="Rossmann-like_a/b/a_fold"/>
</dbReference>
<dbReference type="NCBIfam" id="NF001138">
    <property type="entry name" value="PRK00143.1"/>
    <property type="match status" value="1"/>
</dbReference>
<dbReference type="NCBIfam" id="TIGR00420">
    <property type="entry name" value="trmU"/>
    <property type="match status" value="1"/>
</dbReference>
<dbReference type="PANTHER" id="PTHR11933:SF5">
    <property type="entry name" value="MITOCHONDRIAL TRNA-SPECIFIC 2-THIOURIDYLASE 1"/>
    <property type="match status" value="1"/>
</dbReference>
<dbReference type="PANTHER" id="PTHR11933">
    <property type="entry name" value="TRNA 5-METHYLAMINOMETHYL-2-THIOURIDYLATE -METHYLTRANSFERASE"/>
    <property type="match status" value="1"/>
</dbReference>
<dbReference type="Pfam" id="PF03054">
    <property type="entry name" value="tRNA_Me_trans"/>
    <property type="match status" value="1"/>
</dbReference>
<dbReference type="Pfam" id="PF20258">
    <property type="entry name" value="tRNA_Me_trans_C"/>
    <property type="match status" value="1"/>
</dbReference>
<dbReference type="Pfam" id="PF20259">
    <property type="entry name" value="tRNA_Me_trans_M"/>
    <property type="match status" value="1"/>
</dbReference>
<dbReference type="SUPFAM" id="SSF52402">
    <property type="entry name" value="Adenine nucleotide alpha hydrolases-like"/>
    <property type="match status" value="1"/>
</dbReference>
<sequence length="366" mass="39029">MKVLAAMSGGVDSAVAAARLVEAGHDVTGVHLALSRNPRSHREGSRGCCSLEDSFDARRAADRLGIPFYVWDFSDRFVAEVIDPFIAEYRAGRTPNPCLRCNERIKFAALLERGLDLGYDAVATGHYARTKVVDGVTKLYRSVDPGKDQSYVLAVLNQDQLSHSLFPLGNSLKMNVRQEAAALGLSVADKPDSNDICFIPDGDTPGWLSEKIGSADGEIRDESGALVGHHNGYHHFTIGQRRGLRLGVPAPDGKPRYVLDIEPVNNTVVVGGAEGLTVHHIEAIRPVWCSSEPVETWHGQAQVRAHGDPVPAIISAVPGGVAVELEDSLRGVAPGQAAVFYDGDLVVGSATICGTDRAGVKAEQAA</sequence>
<feature type="chain" id="PRO_1000009551" description="tRNA-specific 2-thiouridylase MnmA">
    <location>
        <begin position="1"/>
        <end position="366"/>
    </location>
</feature>
<feature type="region of interest" description="Interaction with tRNA" evidence="1">
    <location>
        <begin position="147"/>
        <end position="149"/>
    </location>
</feature>
<feature type="active site" description="Nucleophile" evidence="1">
    <location>
        <position position="101"/>
    </location>
</feature>
<feature type="active site" description="Cysteine persulfide intermediate" evidence="1">
    <location>
        <position position="197"/>
    </location>
</feature>
<feature type="binding site" evidence="1">
    <location>
        <begin position="6"/>
        <end position="13"/>
    </location>
    <ligand>
        <name>ATP</name>
        <dbReference type="ChEBI" id="CHEBI:30616"/>
    </ligand>
</feature>
<feature type="binding site" evidence="1">
    <location>
        <position position="32"/>
    </location>
    <ligand>
        <name>ATP</name>
        <dbReference type="ChEBI" id="CHEBI:30616"/>
    </ligand>
</feature>
<feature type="binding site" evidence="1">
    <location>
        <position position="125"/>
    </location>
    <ligand>
        <name>ATP</name>
        <dbReference type="ChEBI" id="CHEBI:30616"/>
    </ligand>
</feature>
<feature type="site" description="Interaction with tRNA" evidence="1">
    <location>
        <position position="126"/>
    </location>
</feature>
<feature type="site" description="Interaction with tRNA" evidence="1">
    <location>
        <position position="336"/>
    </location>
</feature>
<feature type="disulfide bond" description="Alternate" evidence="1">
    <location>
        <begin position="101"/>
        <end position="197"/>
    </location>
</feature>
<protein>
    <recommendedName>
        <fullName evidence="1">tRNA-specific 2-thiouridylase MnmA</fullName>
        <ecNumber evidence="1">2.8.1.13</ecNumber>
    </recommendedName>
</protein>
<name>MNMA_CUTAK</name>
<reference key="1">
    <citation type="journal article" date="2004" name="Science">
        <title>The complete genome sequence of Propionibacterium acnes, a commensal of human skin.</title>
        <authorList>
            <person name="Brueggemann H."/>
            <person name="Henne A."/>
            <person name="Hoster F."/>
            <person name="Liesegang H."/>
            <person name="Wiezer A."/>
            <person name="Strittmatter A."/>
            <person name="Hujer S."/>
            <person name="Duerre P."/>
            <person name="Gottschalk G."/>
        </authorList>
    </citation>
    <scope>NUCLEOTIDE SEQUENCE [LARGE SCALE GENOMIC DNA]</scope>
    <source>
        <strain>DSM 16379 / KPA171202</strain>
    </source>
</reference>
<accession>Q6A8Q1</accession>